<feature type="chain" id="PRO_0000106129" description="Membrane protein">
    <location>
        <begin position="1"/>
        <end position="233"/>
    </location>
</feature>
<feature type="topological domain" description="Virion surface" evidence="2">
    <location>
        <begin position="1"/>
        <end position="31"/>
    </location>
</feature>
<feature type="transmembrane region" description="Helical" evidence="2">
    <location>
        <begin position="32"/>
        <end position="52"/>
    </location>
</feature>
<feature type="topological domain" description="Intravirion" evidence="2">
    <location>
        <begin position="53"/>
        <end position="69"/>
    </location>
</feature>
<feature type="transmembrane region" description="Helical" evidence="2">
    <location>
        <begin position="70"/>
        <end position="90"/>
    </location>
</feature>
<feature type="topological domain" description="Virion surface" evidence="2">
    <location>
        <begin position="91"/>
        <end position="93"/>
    </location>
</feature>
<feature type="transmembrane region" description="Helical" evidence="2">
    <location>
        <begin position="94"/>
        <end position="114"/>
    </location>
</feature>
<feature type="topological domain" description="Intravirion" evidence="2">
    <location>
        <begin position="115"/>
        <end position="233"/>
    </location>
</feature>
<keyword id="KW-1040">Host Golgi apparatus</keyword>
<keyword id="KW-1043">Host membrane</keyword>
<keyword id="KW-0472">Membrane</keyword>
<keyword id="KW-0812">Transmembrane</keyword>
<keyword id="KW-1133">Transmembrane helix</keyword>
<keyword id="KW-0261">Viral envelope protein</keyword>
<keyword id="KW-0468">Viral matrix protein</keyword>
<keyword id="KW-0946">Virion</keyword>
<gene>
    <name type="primary">M</name>
</gene>
<sequence>MFETNYWPFPDQAPNPFTAQIEQLTATENVYIFLTTLFGILQLVYVMFKLLCTMFPSLHFSPIWRGLENFWLFLSLASLAIAYWWLPSMTFTGYWALTIIATILVFILLIMMFVKFVNFVKLFYRTGSFAIAIRGPIVLVALDVTIKLHCTPFAILVKEIGNIFYLSEYCNKPLTAAQIAALRICVNGQWFAYTRSSTTSAARVAAANSTAKYHLFVLQGVAEYTQLSSVKFE</sequence>
<protein>
    <recommendedName>
        <fullName>Membrane protein</fullName>
        <shortName>M protein</shortName>
    </recommendedName>
    <alternativeName>
        <fullName>E1 glycoprotein</fullName>
    </alternativeName>
    <alternativeName>
        <fullName>Matrix glycoprotein</fullName>
    </alternativeName>
    <alternativeName>
        <fullName>Membrane glycoprotein</fullName>
    </alternativeName>
</protein>
<comment type="function">
    <text evidence="1">Component of the viral envelope that plays a central role in virus morphogenesis and assembly via its interactions with other viral proteins.</text>
</comment>
<comment type="subunit">
    <text evidence="1">Homomultimer. Interacts with envelope E protein in the budding compartment of the host cell, which is located between endoplasmic reticulum and the Golgi complex. Forms a complex with HE and S proteins. Interacts with nucleocapsid N protein. This interaction probably participates in RNA packaging into the virus (By similarity).</text>
</comment>
<comment type="subcellular location">
    <subcellularLocation>
        <location evidence="3">Virion membrane</location>
        <topology evidence="3">Multi-pass membrane protein</topology>
    </subcellularLocation>
    <subcellularLocation>
        <location evidence="3">Host Golgi apparatus membrane</location>
        <topology evidence="3">Multi-pass membrane protein</topology>
    </subcellularLocation>
    <text evidence="1">Largely embedded in the lipid bilayer.</text>
</comment>
<organismHost>
    <name type="scientific">Equus caballus</name>
    <name type="common">Horse</name>
    <dbReference type="NCBI Taxonomy" id="9796"/>
</organismHost>
<name>VME1_BEV</name>
<accession>P27904</accession>
<reference key="1">
    <citation type="journal article" date="1991" name="Virology">
        <title>Another triple-spanning envelope protein among intracellularly budding RNA viruses: the torovirus E protein.</title>
        <authorList>
            <person name="den Boon J.A."/>
            <person name="Snijder E.J."/>
            <person name="Locker J.K."/>
            <person name="Horzinek M.C."/>
            <person name="Rottier P.J.M."/>
        </authorList>
    </citation>
    <scope>NUCLEOTIDE SEQUENCE [MRNA]</scope>
    <source>
        <strain>Isolate P138/72</strain>
    </source>
</reference>
<organism>
    <name type="scientific">Berne virus</name>
    <name type="common">BEV</name>
    <dbReference type="NCBI Taxonomy" id="11156"/>
    <lineage>
        <taxon>Viruses</taxon>
        <taxon>Riboviria</taxon>
        <taxon>Orthornavirae</taxon>
        <taxon>Pisuviricota</taxon>
        <taxon>Pisoniviricetes</taxon>
        <taxon>Nidovirales</taxon>
        <taxon>Tornidovirineae</taxon>
        <taxon>Tobaniviridae</taxon>
        <taxon>Torovirinae</taxon>
        <taxon>Torovirus</taxon>
        <taxon>Renitovirus</taxon>
        <taxon>Equine torovirus</taxon>
    </lineage>
</organism>
<evidence type="ECO:0000250" key="1"/>
<evidence type="ECO:0000255" key="2"/>
<evidence type="ECO:0000305" key="3"/>
<proteinExistence type="evidence at transcript level"/>
<dbReference type="EMBL" id="X52505">
    <property type="protein sequence ID" value="CAA36747.1"/>
    <property type="molecule type" value="mRNA"/>
</dbReference>
<dbReference type="PIR" id="A39989">
    <property type="entry name" value="VMWJBV"/>
</dbReference>
<dbReference type="SMR" id="P27904"/>
<dbReference type="Proteomes" id="UP000006571">
    <property type="component" value="Genome"/>
</dbReference>
<dbReference type="GO" id="GO:0044178">
    <property type="term" value="C:host cell Golgi membrane"/>
    <property type="evidence" value="ECO:0007669"/>
    <property type="project" value="UniProtKB-SubCell"/>
</dbReference>
<dbReference type="GO" id="GO:0016020">
    <property type="term" value="C:membrane"/>
    <property type="evidence" value="ECO:0007669"/>
    <property type="project" value="UniProtKB-KW"/>
</dbReference>
<dbReference type="GO" id="GO:0019031">
    <property type="term" value="C:viral envelope"/>
    <property type="evidence" value="ECO:0007669"/>
    <property type="project" value="UniProtKB-KW"/>
</dbReference>
<dbReference type="GO" id="GO:0055036">
    <property type="term" value="C:virion membrane"/>
    <property type="evidence" value="ECO:0007669"/>
    <property type="project" value="UniProtKB-SubCell"/>
</dbReference>
<dbReference type="GO" id="GO:0039660">
    <property type="term" value="F:structural constituent of virion"/>
    <property type="evidence" value="ECO:0007669"/>
    <property type="project" value="UniProtKB-KW"/>
</dbReference>
<dbReference type="InterPro" id="IPR024251">
    <property type="entry name" value="M_Torovirus"/>
</dbReference>
<dbReference type="Pfam" id="PF10943">
    <property type="entry name" value="DUF2632"/>
    <property type="match status" value="1"/>
</dbReference>